<dbReference type="EMBL" id="AE000657">
    <property type="protein sequence ID" value="AAC06923.1"/>
    <property type="molecule type" value="Genomic_DNA"/>
</dbReference>
<dbReference type="PIR" id="B70366">
    <property type="entry name" value="B70366"/>
</dbReference>
<dbReference type="RefSeq" id="NP_213518.1">
    <property type="nucleotide sequence ID" value="NC_000918.1"/>
</dbReference>
<dbReference type="RefSeq" id="WP_010880456.1">
    <property type="nucleotide sequence ID" value="NC_000918.1"/>
</dbReference>
<dbReference type="STRING" id="224324.aq_755"/>
<dbReference type="EnsemblBacteria" id="AAC06923">
    <property type="protein sequence ID" value="AAC06923"/>
    <property type="gene ID" value="aq_755"/>
</dbReference>
<dbReference type="KEGG" id="aae:aq_755"/>
<dbReference type="eggNOG" id="COG1332">
    <property type="taxonomic scope" value="Bacteria"/>
</dbReference>
<dbReference type="HOGENOM" id="CLU_1145367_0_0_0"/>
<dbReference type="InParanoid" id="O66957"/>
<dbReference type="OrthoDB" id="9779564at2"/>
<dbReference type="Proteomes" id="UP000000798">
    <property type="component" value="Chromosome"/>
</dbReference>
<gene>
    <name type="ordered locus">aq_755</name>
</gene>
<name>Y755_AQUAE</name>
<sequence length="242" mass="28618">MKLLAWSPVLLSSKKFPEENGKKFIPGSEIKEAIKDALVYYFLKKDKALNTKVKNYVKRHKRTSLRKFVREIEKMVFEAEKEFIESIEVPEKVYLSSEGIKEKVVEVYDLKRKDFKDYFKSEVFEGVAEFEVKANNYEKLRSACHSYAEALAHAELTLVRDHPIGEIFHKNLLSEMKNWEIPLRVGFWTTAPFGGRLFWFWGDKEIRNRIRRLYRLDIRPRSVIYVPSEKKTAGWTEVKKDA</sequence>
<organism>
    <name type="scientific">Aquifex aeolicus (strain VF5)</name>
    <dbReference type="NCBI Taxonomy" id="224324"/>
    <lineage>
        <taxon>Bacteria</taxon>
        <taxon>Pseudomonadati</taxon>
        <taxon>Aquificota</taxon>
        <taxon>Aquificia</taxon>
        <taxon>Aquificales</taxon>
        <taxon>Aquificaceae</taxon>
        <taxon>Aquifex</taxon>
    </lineage>
</organism>
<keyword id="KW-1185">Reference proteome</keyword>
<accession>O66957</accession>
<reference key="1">
    <citation type="journal article" date="1998" name="Nature">
        <title>The complete genome of the hyperthermophilic bacterium Aquifex aeolicus.</title>
        <authorList>
            <person name="Deckert G."/>
            <person name="Warren P.V."/>
            <person name="Gaasterland T."/>
            <person name="Young W.G."/>
            <person name="Lenox A.L."/>
            <person name="Graham D.E."/>
            <person name="Overbeek R."/>
            <person name="Snead M.A."/>
            <person name="Keller M."/>
            <person name="Aujay M."/>
            <person name="Huber R."/>
            <person name="Feldman R.A."/>
            <person name="Short J.M."/>
            <person name="Olsen G.J."/>
            <person name="Swanson R.V."/>
        </authorList>
    </citation>
    <scope>NUCLEOTIDE SEQUENCE [LARGE SCALE GENOMIC DNA]</scope>
    <source>
        <strain>VF5</strain>
    </source>
</reference>
<proteinExistence type="predicted"/>
<feature type="chain" id="PRO_0000186877" description="Uncharacterized protein aq_755">
    <location>
        <begin position="1"/>
        <end position="242"/>
    </location>
</feature>
<protein>
    <recommendedName>
        <fullName>Uncharacterized protein aq_755</fullName>
    </recommendedName>
</protein>